<organism>
    <name type="scientific">Salinispora arenicola (strain CNS-205)</name>
    <dbReference type="NCBI Taxonomy" id="391037"/>
    <lineage>
        <taxon>Bacteria</taxon>
        <taxon>Bacillati</taxon>
        <taxon>Actinomycetota</taxon>
        <taxon>Actinomycetes</taxon>
        <taxon>Micromonosporales</taxon>
        <taxon>Micromonosporaceae</taxon>
        <taxon>Salinispora</taxon>
    </lineage>
</organism>
<feature type="chain" id="PRO_1000086051" description="Small ribosomal subunit protein uS5">
    <location>
        <begin position="1"/>
        <end position="204"/>
    </location>
</feature>
<feature type="domain" description="S5 DRBM" evidence="1">
    <location>
        <begin position="37"/>
        <end position="100"/>
    </location>
</feature>
<feature type="region of interest" description="Disordered" evidence="2">
    <location>
        <begin position="1"/>
        <end position="34"/>
    </location>
</feature>
<feature type="compositionally biased region" description="Gly residues" evidence="2">
    <location>
        <begin position="1"/>
        <end position="15"/>
    </location>
</feature>
<feature type="compositionally biased region" description="Basic and acidic residues" evidence="2">
    <location>
        <begin position="16"/>
        <end position="26"/>
    </location>
</feature>
<evidence type="ECO:0000255" key="1">
    <source>
        <dbReference type="HAMAP-Rule" id="MF_01307"/>
    </source>
</evidence>
<evidence type="ECO:0000256" key="2">
    <source>
        <dbReference type="SAM" id="MobiDB-lite"/>
    </source>
</evidence>
<evidence type="ECO:0000305" key="3"/>
<reference key="1">
    <citation type="submission" date="2007-10" db="EMBL/GenBank/DDBJ databases">
        <title>Complete sequence of Salinispora arenicola CNS-205.</title>
        <authorList>
            <consortium name="US DOE Joint Genome Institute"/>
            <person name="Copeland A."/>
            <person name="Lucas S."/>
            <person name="Lapidus A."/>
            <person name="Barry K."/>
            <person name="Glavina del Rio T."/>
            <person name="Dalin E."/>
            <person name="Tice H."/>
            <person name="Pitluck S."/>
            <person name="Foster B."/>
            <person name="Schmutz J."/>
            <person name="Larimer F."/>
            <person name="Land M."/>
            <person name="Hauser L."/>
            <person name="Kyrpides N."/>
            <person name="Ivanova N."/>
            <person name="Jensen P.R."/>
            <person name="Moore B.S."/>
            <person name="Penn K."/>
            <person name="Jenkins C."/>
            <person name="Udwary D."/>
            <person name="Xiang L."/>
            <person name="Gontang E."/>
            <person name="Richardson P."/>
        </authorList>
    </citation>
    <scope>NUCLEOTIDE SEQUENCE [LARGE SCALE GENOMIC DNA]</scope>
    <source>
        <strain>CNS-205</strain>
    </source>
</reference>
<proteinExistence type="inferred from homology"/>
<sequence>MPGQQRRGGGSGGNEGGRRDNRREGGRGNAPVEKTPHLERVVAINRVAKVVKGGRRFSFTALVIVGDGDGTVGVGYGKAKEVPAAIAKGVEEAKKHFFKVPRIGQSIPHPVQGEDAAGVVLLKPASAGTGVIAGGPVRAVLECAGIHDVLSKSLGSSNPINIVHATVAALKGLESPEAVASRRGLPVEDVAPAAMLASRAEVAS</sequence>
<comment type="function">
    <text evidence="1">With S4 and S12 plays an important role in translational accuracy.</text>
</comment>
<comment type="function">
    <text evidence="1">Located at the back of the 30S subunit body where it stabilizes the conformation of the head with respect to the body.</text>
</comment>
<comment type="subunit">
    <text evidence="1">Part of the 30S ribosomal subunit. Contacts proteins S4 and S8.</text>
</comment>
<comment type="domain">
    <text>The N-terminal domain interacts with the head of the 30S subunit; the C-terminal domain interacts with the body and contacts protein S4. The interaction surface between S4 and S5 is involved in control of translational fidelity.</text>
</comment>
<comment type="similarity">
    <text evidence="1">Belongs to the universal ribosomal protein uS5 family.</text>
</comment>
<keyword id="KW-0687">Ribonucleoprotein</keyword>
<keyword id="KW-0689">Ribosomal protein</keyword>
<keyword id="KW-0694">RNA-binding</keyword>
<keyword id="KW-0699">rRNA-binding</keyword>
<dbReference type="EMBL" id="CP000850">
    <property type="protein sequence ID" value="ABW00080.1"/>
    <property type="molecule type" value="Genomic_DNA"/>
</dbReference>
<dbReference type="SMR" id="A8M512"/>
<dbReference type="STRING" id="391037.Sare_4298"/>
<dbReference type="KEGG" id="saq:Sare_4298"/>
<dbReference type="PATRIC" id="fig|391037.6.peg.4339"/>
<dbReference type="eggNOG" id="COG0098">
    <property type="taxonomic scope" value="Bacteria"/>
</dbReference>
<dbReference type="HOGENOM" id="CLU_065898_1_2_11"/>
<dbReference type="OrthoDB" id="9809045at2"/>
<dbReference type="GO" id="GO:0015935">
    <property type="term" value="C:small ribosomal subunit"/>
    <property type="evidence" value="ECO:0007669"/>
    <property type="project" value="InterPro"/>
</dbReference>
<dbReference type="GO" id="GO:0019843">
    <property type="term" value="F:rRNA binding"/>
    <property type="evidence" value="ECO:0007669"/>
    <property type="project" value="UniProtKB-UniRule"/>
</dbReference>
<dbReference type="GO" id="GO:0003735">
    <property type="term" value="F:structural constituent of ribosome"/>
    <property type="evidence" value="ECO:0007669"/>
    <property type="project" value="InterPro"/>
</dbReference>
<dbReference type="GO" id="GO:0006412">
    <property type="term" value="P:translation"/>
    <property type="evidence" value="ECO:0007669"/>
    <property type="project" value="UniProtKB-UniRule"/>
</dbReference>
<dbReference type="FunFam" id="3.30.160.20:FF:000001">
    <property type="entry name" value="30S ribosomal protein S5"/>
    <property type="match status" value="1"/>
</dbReference>
<dbReference type="FunFam" id="3.30.230.10:FF:000002">
    <property type="entry name" value="30S ribosomal protein S5"/>
    <property type="match status" value="1"/>
</dbReference>
<dbReference type="Gene3D" id="3.30.160.20">
    <property type="match status" value="1"/>
</dbReference>
<dbReference type="Gene3D" id="3.30.230.10">
    <property type="match status" value="1"/>
</dbReference>
<dbReference type="HAMAP" id="MF_01307_B">
    <property type="entry name" value="Ribosomal_uS5_B"/>
    <property type="match status" value="1"/>
</dbReference>
<dbReference type="InterPro" id="IPR020568">
    <property type="entry name" value="Ribosomal_Su5_D2-typ_SF"/>
</dbReference>
<dbReference type="InterPro" id="IPR000851">
    <property type="entry name" value="Ribosomal_uS5"/>
</dbReference>
<dbReference type="InterPro" id="IPR005712">
    <property type="entry name" value="Ribosomal_uS5_bac-type"/>
</dbReference>
<dbReference type="InterPro" id="IPR005324">
    <property type="entry name" value="Ribosomal_uS5_C"/>
</dbReference>
<dbReference type="InterPro" id="IPR013810">
    <property type="entry name" value="Ribosomal_uS5_N"/>
</dbReference>
<dbReference type="InterPro" id="IPR018192">
    <property type="entry name" value="Ribosomal_uS5_N_CS"/>
</dbReference>
<dbReference type="InterPro" id="IPR014721">
    <property type="entry name" value="Ribsml_uS5_D2-typ_fold_subgr"/>
</dbReference>
<dbReference type="NCBIfam" id="TIGR01021">
    <property type="entry name" value="rpsE_bact"/>
    <property type="match status" value="1"/>
</dbReference>
<dbReference type="PANTHER" id="PTHR48277">
    <property type="entry name" value="MITOCHONDRIAL RIBOSOMAL PROTEIN S5"/>
    <property type="match status" value="1"/>
</dbReference>
<dbReference type="PANTHER" id="PTHR48277:SF1">
    <property type="entry name" value="MITOCHONDRIAL RIBOSOMAL PROTEIN S5"/>
    <property type="match status" value="1"/>
</dbReference>
<dbReference type="Pfam" id="PF00333">
    <property type="entry name" value="Ribosomal_S5"/>
    <property type="match status" value="1"/>
</dbReference>
<dbReference type="Pfam" id="PF03719">
    <property type="entry name" value="Ribosomal_S5_C"/>
    <property type="match status" value="1"/>
</dbReference>
<dbReference type="SUPFAM" id="SSF54768">
    <property type="entry name" value="dsRNA-binding domain-like"/>
    <property type="match status" value="1"/>
</dbReference>
<dbReference type="SUPFAM" id="SSF54211">
    <property type="entry name" value="Ribosomal protein S5 domain 2-like"/>
    <property type="match status" value="1"/>
</dbReference>
<dbReference type="PROSITE" id="PS00585">
    <property type="entry name" value="RIBOSOMAL_S5"/>
    <property type="match status" value="1"/>
</dbReference>
<dbReference type="PROSITE" id="PS50881">
    <property type="entry name" value="S5_DSRBD"/>
    <property type="match status" value="1"/>
</dbReference>
<gene>
    <name evidence="1" type="primary">rpsE</name>
    <name type="ordered locus">Sare_4298</name>
</gene>
<accession>A8M512</accession>
<protein>
    <recommendedName>
        <fullName evidence="1">Small ribosomal subunit protein uS5</fullName>
    </recommendedName>
    <alternativeName>
        <fullName evidence="3">30S ribosomal protein S5</fullName>
    </alternativeName>
</protein>
<name>RS5_SALAI</name>